<sequence length="659" mass="75807">MTTKIFKRIIVFAVIALSSGNILAQSSSITRKDFDHINLEYSGLEKVNKAVAAGNYDDAAKALLAYYREKSKAREPDFSNAEKPADIRQPIDKVTREMADKALVHQFQPHKGYGYFDYGKDINWQMWPVKDNEVRWQLHRVKWWQAMALVYHATGDEKYAREWVYQYSDWARKNPLGLSQDNDKFVWRPLEVSDRVQSLPPTFSLFVNSPAFTPAFLMEFLNSYHQQADYLSTHYAEQGNHRLFEAQRNLFAGVSFPEFKDSPRWRQTGISVLNTEIKKQVYADGMQFELSPIYHVAAIDIFLKAYGSAKRVNLEKEFPQSYVQTVENMIMALISISLPDYNTPMFGDSWITDKNFRMAQFASWARVFPANQAIKYFATDGKQGKAPNFLSKALSNAGFYTFRSGWDKNATVMVLKASPPGEFHAQPDNGTFELFIKGRNFTPDAGVFVYSGDEAIMKLRNWYRQTRIHSTLTLDNQNMVITKARQNKWETGNNLDVLTYTNPSYPNLDHQRSVLFINKKYFLVIDRAIGEATGNLGVHWQLKEDSNPVFDKTKNRVYTTYRDGNNLMIQSLNADRTSLNEEEGKVSYVYNKELKRPAFVFEKPKKNAGTQNFVSIVYPYDGQKAPEISIRENKGNDFEKGKLNLTLTINGKQQLVLVP</sequence>
<organism>
    <name type="scientific">Pedobacter heparinus (strain ATCC 13125 / DSM 2366 / CIP 104194 / JCM 7457 / NBRC 12017 / NCIMB 9290 / NRRL B-14731 / HIM 762-3)</name>
    <dbReference type="NCBI Taxonomy" id="485917"/>
    <lineage>
        <taxon>Bacteria</taxon>
        <taxon>Pseudomonadati</taxon>
        <taxon>Bacteroidota</taxon>
        <taxon>Sphingobacteriia</taxon>
        <taxon>Sphingobacteriales</taxon>
        <taxon>Sphingobacteriaceae</taxon>
        <taxon>Pedobacter</taxon>
    </lineage>
</organism>
<dbReference type="EC" id="4.2.2.8"/>
<dbReference type="EMBL" id="U27586">
    <property type="protein sequence ID" value="AAB18278.1"/>
    <property type="molecule type" value="Genomic_DNA"/>
</dbReference>
<dbReference type="EMBL" id="CP001681">
    <property type="protein sequence ID" value="ACU05988.1"/>
    <property type="status" value="ALT_INIT"/>
    <property type="molecule type" value="Genomic_DNA"/>
</dbReference>
<dbReference type="PIR" id="JC4910">
    <property type="entry name" value="JC4910"/>
</dbReference>
<dbReference type="RefSeq" id="WP_036674924.1">
    <property type="nucleotide sequence ID" value="NC_013061.1"/>
</dbReference>
<dbReference type="PDB" id="4MMH">
    <property type="method" value="X-ray"/>
    <property type="resolution" value="2.20 A"/>
    <property type="chains" value="A=25-659"/>
</dbReference>
<dbReference type="PDB" id="4MMI">
    <property type="method" value="X-ray"/>
    <property type="resolution" value="2.40 A"/>
    <property type="chains" value="A=25-659"/>
</dbReference>
<dbReference type="PDBsum" id="4MMH"/>
<dbReference type="PDBsum" id="4MMI"/>
<dbReference type="SMR" id="Q59289"/>
<dbReference type="STRING" id="485917.Phep_3797"/>
<dbReference type="CAZy" id="PL12">
    <property type="family name" value="Polysaccharide Lyase Family 12"/>
</dbReference>
<dbReference type="KEGG" id="phe:Phep_3797"/>
<dbReference type="eggNOG" id="COG5434">
    <property type="taxonomic scope" value="Bacteria"/>
</dbReference>
<dbReference type="HOGENOM" id="CLU_013047_1_0_10"/>
<dbReference type="OrthoDB" id="7335480at2"/>
<dbReference type="BioCyc" id="MetaCyc:MONOMER-19212"/>
<dbReference type="BRENDA" id="4.2.2.8">
    <property type="organism ID" value="2286"/>
</dbReference>
<dbReference type="EvolutionaryTrace" id="Q59289"/>
<dbReference type="Proteomes" id="UP000000852">
    <property type="component" value="Chromosome"/>
</dbReference>
<dbReference type="GO" id="GO:0042597">
    <property type="term" value="C:periplasmic space"/>
    <property type="evidence" value="ECO:0000304"/>
    <property type="project" value="UniProtKB"/>
</dbReference>
<dbReference type="GO" id="GO:0015021">
    <property type="term" value="F:heparin-sulfate lyase activity"/>
    <property type="evidence" value="ECO:0000314"/>
    <property type="project" value="UniProtKB"/>
</dbReference>
<dbReference type="GO" id="GO:0030200">
    <property type="term" value="P:heparan sulfate proteoglycan catabolic process"/>
    <property type="evidence" value="ECO:0000314"/>
    <property type="project" value="UniProtKB"/>
</dbReference>
<dbReference type="Gene3D" id="2.70.98.70">
    <property type="match status" value="1"/>
</dbReference>
<dbReference type="Gene3D" id="1.50.10.100">
    <property type="entry name" value="Chondroitin AC/alginate lyase"/>
    <property type="match status" value="1"/>
</dbReference>
<dbReference type="InterPro" id="IPR008929">
    <property type="entry name" value="Chondroitin_lyas"/>
</dbReference>
<dbReference type="InterPro" id="IPR012480">
    <property type="entry name" value="Hepar_II_III_C"/>
</dbReference>
<dbReference type="InterPro" id="IPR031680">
    <property type="entry name" value="Hepar_II_III_N"/>
</dbReference>
<dbReference type="InterPro" id="IPR054646">
    <property type="entry name" value="HepC"/>
</dbReference>
<dbReference type="NCBIfam" id="NF045573">
    <property type="entry name" value="Hepsulflyase_CFB"/>
    <property type="match status" value="1"/>
</dbReference>
<dbReference type="PANTHER" id="PTHR39210">
    <property type="entry name" value="HEPARIN-SULFATE LYASE"/>
    <property type="match status" value="1"/>
</dbReference>
<dbReference type="PANTHER" id="PTHR39210:SF1">
    <property type="entry name" value="HEPARIN-SULFATE LYASE"/>
    <property type="match status" value="1"/>
</dbReference>
<dbReference type="Pfam" id="PF07940">
    <property type="entry name" value="Hepar_II_III_C"/>
    <property type="match status" value="1"/>
</dbReference>
<dbReference type="Pfam" id="PF16889">
    <property type="entry name" value="Hepar_II_III_N"/>
    <property type="match status" value="1"/>
</dbReference>
<dbReference type="SUPFAM" id="SSF48230">
    <property type="entry name" value="Chondroitin AC/alginate lyase"/>
    <property type="match status" value="1"/>
</dbReference>
<evidence type="ECO:0000255" key="1"/>
<evidence type="ECO:0000269" key="2">
    <source>
    </source>
</evidence>
<evidence type="ECO:0000269" key="3">
    <source>
    </source>
</evidence>
<evidence type="ECO:0000305" key="4"/>
<evidence type="ECO:0007829" key="5">
    <source>
        <dbReference type="PDB" id="4MMH"/>
    </source>
</evidence>
<name>HEPC_PEDHD</name>
<protein>
    <recommendedName>
        <fullName>Heparin-sulfate lyase</fullName>
        <ecNumber>4.2.2.8</ecNumber>
    </recommendedName>
    <alternativeName>
        <fullName>Heparin-sulfate eliminase</fullName>
    </alternativeName>
    <alternativeName>
        <fullName>Heparinase III</fullName>
        <shortName>HepIII</shortName>
    </alternativeName>
    <alternativeName>
        <fullName>Heparitin-sulfate lyase</fullName>
    </alternativeName>
</protein>
<reference key="1">
    <citation type="journal article" date="1996" name="Appl. Environ. Microbiol.">
        <title>Isolation and expression in Escherichia coli of hepB and hepC, genes coding for the glycosaminoglycan-degrading enzymes heparinase II and heparinase III, respectively, from Flavobacterium heparinum.</title>
        <authorList>
            <person name="Su H."/>
            <person name="Blain F."/>
            <person name="Musil R.A."/>
            <person name="Zimmermann J.J."/>
            <person name="Gu K."/>
            <person name="Bennett D.C."/>
        </authorList>
    </citation>
    <scope>NUCLEOTIDE SEQUENCE [GENOMIC DNA]</scope>
    <scope>PROTEIN SEQUENCE OF N-TERMINUS</scope>
    <scope>PROTEIN SEQUENCE OF 99-123; 128-142 AND 414-436</scope>
    <scope>FUNCTION</scope>
    <scope>CATALYTIC ACTIVITY</scope>
    <scope>SUBCELLULAR LOCATION</scope>
    <source>
        <strain>ATCC 13125 / DSM 2366 / CIP 104194 / JCM 7457 / NBRC 12017 / NCIMB 9290 / NRRL B-14731 / HIM 762-3</strain>
    </source>
</reference>
<reference key="2">
    <citation type="journal article" date="1996" name="Biochem. Biophys. Res. Commun.">
        <title>Heparinase III from Flavobacterium heparinum: cloning and recombinant expression in Escherichia coli.</title>
        <authorList>
            <person name="Godavarti R."/>
            <person name="Davis M."/>
            <person name="Venkataraman G."/>
            <person name="Cooney C."/>
            <person name="Langer R."/>
            <person name="Sasisekharan R."/>
        </authorList>
    </citation>
    <scope>NUCLEOTIDE SEQUENCE [GENOMIC DNA]</scope>
    <scope>PROTEIN SEQUENCE OF 62-68; 75-88; 249-264; 383-390; 404-408; 459-464; 468-483; 513-519; 597-605 AND 625-631</scope>
</reference>
<reference key="3">
    <citation type="journal article" date="2009" name="Stand. Genomic Sci.">
        <title>Complete genome sequence of Pedobacter heparinus type strain (HIM 762-3).</title>
        <authorList>
            <person name="Han C."/>
            <person name="Spring S."/>
            <person name="Lapidus A."/>
            <person name="Del Rio T.G."/>
            <person name="Tice H."/>
            <person name="Copeland A."/>
            <person name="Cheng J.F."/>
            <person name="Lucas S."/>
            <person name="Chen F."/>
            <person name="Nolan M."/>
            <person name="Bruce D."/>
            <person name="Goodwin L."/>
            <person name="Pitluck S."/>
            <person name="Ivanova N."/>
            <person name="Mavromatis K."/>
            <person name="Mikhailova N."/>
            <person name="Pati A."/>
            <person name="Chen A."/>
            <person name="Palaniappan K."/>
            <person name="Land M."/>
            <person name="Hauser L."/>
            <person name="Chang Y.J."/>
            <person name="Jeffries C.C."/>
            <person name="Saunders E."/>
            <person name="Chertkov O."/>
            <person name="Brettin T."/>
            <person name="Goker M."/>
            <person name="Rohde M."/>
            <person name="Bristow J."/>
            <person name="Eisen J.A."/>
            <person name="Markowitz V."/>
            <person name="Hugenholtz P."/>
            <person name="Kyrpides N.C."/>
            <person name="Klenk H.P."/>
            <person name="Detter J.C."/>
        </authorList>
    </citation>
    <scope>NUCLEOTIDE SEQUENCE [LARGE SCALE GENOMIC DNA]</scope>
    <source>
        <strain>ATCC 13125 / DSM 2366 / CIP 104194 / JCM 7457 / NBRC 12017 / NCIMB 9290 / NRRL B-14731 / HIM 762-3</strain>
    </source>
</reference>
<reference key="4">
    <citation type="journal article" date="1990" name="J. Biol. Chem.">
        <title>Purification and substrate specificity of heparitinase I and heparitinase II from Flavobacterium heparinum. Analyses of the heparin and heparan sulfate degradation products by 13C NMR spectroscopy.</title>
        <authorList>
            <person name="Nader H.B."/>
            <person name="Porcionatto M.A."/>
            <person name="Tersariol I.L."/>
            <person name="Pinhal M.A."/>
            <person name="Oliveira F.W."/>
            <person name="Moraes C.T."/>
            <person name="Dietrich C.P."/>
        </authorList>
    </citation>
    <scope>IDENTIFICATION</scope>
</reference>
<reference key="5">
    <citation type="journal article" date="2000" name="Biochemistry">
        <title>Histidine 295 and histidine 510 are crucial for the enzymatic degradation of heparan sulfate by heparinase III.</title>
        <authorList>
            <person name="Pojasek K."/>
            <person name="Shriver Z."/>
            <person name="Hu Y."/>
            <person name="Sasisekharan R."/>
        </authorList>
    </citation>
    <scope>FUNCTION</scope>
    <scope>BIOPHYSICOCHEMICAL PROPERTIES</scope>
    <scope>MUTAGENESIS OF HIS-295 AND HIS-510</scope>
</reference>
<proteinExistence type="evidence at protein level"/>
<accession>Q59289</accession>
<accession>C6XUY0</accession>
<comment type="function">
    <text evidence="2 3">Specifically cleaves heparan sulfate-rich regions of acidic polysaccharides. Does not act on N,O-desulfated glucosamine or N-acetyl-O-sulfated glucosamine linkages. Functions in cleaving metazoan heparan sulfate and providing carbon, nitrogen and sulfate sources for microorganisms.</text>
</comment>
<comment type="catalytic activity">
    <reaction evidence="3">
        <text>Elimination of sulfate, appears to act on linkages between N-acetyl-D-glucosamine and uronate. Product is an unsaturated sugar.</text>
        <dbReference type="EC" id="4.2.2.8"/>
    </reaction>
</comment>
<comment type="biophysicochemical properties">
    <kinetics>
        <KM evidence="2">143 uM for heparan sulfate</KM>
        <KM evidence="2">80 uM for heparan sulfate (with recombinant enzyme)</KM>
        <text>kcat is 94 sec(-1). kcat is 78 sec(-1) with recombinant enzyme.</text>
    </kinetics>
</comment>
<comment type="subcellular location">
    <subcellularLocation>
        <location evidence="3">Periplasm</location>
    </subcellularLocation>
</comment>
<comment type="similarity">
    <text evidence="4">Belongs to the polysaccharide lyase 12 family.</text>
</comment>
<comment type="sequence caution" evidence="4">
    <conflict type="erroneous initiation">
        <sequence resource="EMBL-CDS" id="ACU05988"/>
    </conflict>
    <text>Extended N-terminus.</text>
</comment>
<feature type="signal peptide" evidence="3">
    <location>
        <begin position="1"/>
        <end position="24"/>
    </location>
</feature>
<feature type="chain" id="PRO_5000144614" description="Heparin-sulfate lyase">
    <location>
        <begin position="25"/>
        <end position="659"/>
    </location>
</feature>
<feature type="active site" description="Proton acceptor" evidence="1">
    <location>
        <position position="294"/>
    </location>
</feature>
<feature type="mutagenesis site" description="Impaired catalytic activity." evidence="2">
    <original>H</original>
    <variation>A</variation>
    <location>
        <position position="295"/>
    </location>
</feature>
<feature type="mutagenesis site" description="Impaired catalytic activity." evidence="2">
    <original>H</original>
    <variation>A</variation>
    <location>
        <position position="510"/>
    </location>
</feature>
<feature type="sequence conflict" description="In Ref. 1; AA sequence." evidence="4" ref="1">
    <original>PV</original>
    <variation>LI</variation>
    <location>
        <begin position="128"/>
        <end position="129"/>
    </location>
</feature>
<feature type="helix" evidence="5">
    <location>
        <begin position="32"/>
        <end position="34"/>
    </location>
</feature>
<feature type="turn" evidence="5">
    <location>
        <begin position="42"/>
        <end position="44"/>
    </location>
</feature>
<feature type="helix" evidence="5">
    <location>
        <begin position="45"/>
        <end position="52"/>
    </location>
</feature>
<feature type="helix" evidence="5">
    <location>
        <begin position="56"/>
        <end position="72"/>
    </location>
</feature>
<feature type="strand" evidence="5">
    <location>
        <begin position="81"/>
        <end position="83"/>
    </location>
</feature>
<feature type="strand" evidence="5">
    <location>
        <begin position="87"/>
        <end position="89"/>
    </location>
</feature>
<feature type="helix" evidence="5">
    <location>
        <begin position="93"/>
        <end position="103"/>
    </location>
</feature>
<feature type="turn" evidence="5">
    <location>
        <begin position="119"/>
        <end position="122"/>
    </location>
</feature>
<feature type="strand" evidence="5">
    <location>
        <begin position="128"/>
        <end position="130"/>
    </location>
</feature>
<feature type="helix" evidence="5">
    <location>
        <begin position="132"/>
        <end position="138"/>
    </location>
</feature>
<feature type="helix" evidence="5">
    <location>
        <begin position="143"/>
        <end position="154"/>
    </location>
</feature>
<feature type="helix" evidence="5">
    <location>
        <begin position="157"/>
        <end position="173"/>
    </location>
</feature>
<feature type="helix" evidence="5">
    <location>
        <begin position="180"/>
        <end position="186"/>
    </location>
</feature>
<feature type="helix" evidence="5">
    <location>
        <begin position="189"/>
        <end position="206"/>
    </location>
</feature>
<feature type="helix" evidence="5">
    <location>
        <begin position="214"/>
        <end position="232"/>
    </location>
</feature>
<feature type="strand" evidence="5">
    <location>
        <begin position="237"/>
        <end position="239"/>
    </location>
</feature>
<feature type="helix" evidence="5">
    <location>
        <begin position="242"/>
        <end position="255"/>
    </location>
</feature>
<feature type="helix" evidence="5">
    <location>
        <begin position="262"/>
        <end position="280"/>
    </location>
</feature>
<feature type="helix" evidence="5">
    <location>
        <begin position="292"/>
        <end position="310"/>
    </location>
</feature>
<feature type="turn" evidence="5">
    <location>
        <begin position="311"/>
        <end position="313"/>
    </location>
</feature>
<feature type="helix" evidence="5">
    <location>
        <begin position="315"/>
        <end position="317"/>
    </location>
</feature>
<feature type="helix" evidence="5">
    <location>
        <begin position="320"/>
        <end position="335"/>
    </location>
</feature>
<feature type="helix" evidence="5">
    <location>
        <begin position="354"/>
        <end position="367"/>
    </location>
</feature>
<feature type="helix" evidence="5">
    <location>
        <begin position="372"/>
        <end position="378"/>
    </location>
</feature>
<feature type="turn" evidence="5">
    <location>
        <begin position="379"/>
        <end position="381"/>
    </location>
</feature>
<feature type="strand" evidence="5">
    <location>
        <begin position="382"/>
        <end position="384"/>
    </location>
</feature>
<feature type="strand" evidence="5">
    <location>
        <begin position="390"/>
        <end position="394"/>
    </location>
</feature>
<feature type="turn" evidence="5">
    <location>
        <begin position="395"/>
        <end position="398"/>
    </location>
</feature>
<feature type="strand" evidence="5">
    <location>
        <begin position="399"/>
        <end position="404"/>
    </location>
</feature>
<feature type="strand" evidence="5">
    <location>
        <begin position="411"/>
        <end position="416"/>
    </location>
</feature>
<feature type="strand" evidence="5">
    <location>
        <begin position="432"/>
        <end position="436"/>
    </location>
</feature>
<feature type="strand" evidence="5">
    <location>
        <begin position="439"/>
        <end position="442"/>
    </location>
</feature>
<feature type="helix" evidence="5">
    <location>
        <begin position="454"/>
        <end position="463"/>
    </location>
</feature>
<feature type="helix" evidence="5">
    <location>
        <begin position="466"/>
        <end position="468"/>
    </location>
</feature>
<feature type="strand" evidence="5">
    <location>
        <begin position="469"/>
        <end position="474"/>
    </location>
</feature>
<feature type="strand" evidence="5">
    <location>
        <begin position="485"/>
        <end position="490"/>
    </location>
</feature>
<feature type="strand" evidence="5">
    <location>
        <begin position="493"/>
        <end position="505"/>
    </location>
</feature>
<feature type="strand" evidence="5">
    <location>
        <begin position="508"/>
        <end position="517"/>
    </location>
</feature>
<feature type="turn" evidence="5">
    <location>
        <begin position="518"/>
        <end position="520"/>
    </location>
</feature>
<feature type="strand" evidence="5">
    <location>
        <begin position="521"/>
        <end position="531"/>
    </location>
</feature>
<feature type="strand" evidence="5">
    <location>
        <begin position="534"/>
        <end position="541"/>
    </location>
</feature>
<feature type="strand" evidence="5">
    <location>
        <begin position="549"/>
        <end position="551"/>
    </location>
</feature>
<feature type="turn" evidence="5">
    <location>
        <begin position="552"/>
        <end position="555"/>
    </location>
</feature>
<feature type="strand" evidence="5">
    <location>
        <begin position="556"/>
        <end position="558"/>
    </location>
</feature>
<feature type="strand" evidence="5">
    <location>
        <begin position="564"/>
        <end position="571"/>
    </location>
</feature>
<feature type="strand" evidence="5">
    <location>
        <begin position="578"/>
        <end position="582"/>
    </location>
</feature>
<feature type="strand" evidence="5">
    <location>
        <begin position="585"/>
        <end position="589"/>
    </location>
</feature>
<feature type="strand" evidence="5">
    <location>
        <begin position="592"/>
        <end position="595"/>
    </location>
</feature>
<feature type="strand" evidence="5">
    <location>
        <begin position="598"/>
        <end position="605"/>
    </location>
</feature>
<feature type="strand" evidence="5">
    <location>
        <begin position="607"/>
        <end position="609"/>
    </location>
</feature>
<feature type="strand" evidence="5">
    <location>
        <begin position="611"/>
        <end position="624"/>
    </location>
</feature>
<feature type="strand" evidence="5">
    <location>
        <begin position="628"/>
        <end position="632"/>
    </location>
</feature>
<feature type="turn" evidence="5">
    <location>
        <begin position="638"/>
        <end position="641"/>
    </location>
</feature>
<feature type="strand" evidence="5">
    <location>
        <begin position="642"/>
        <end position="649"/>
    </location>
</feature>
<feature type="strand" evidence="5">
    <location>
        <begin position="652"/>
        <end position="659"/>
    </location>
</feature>
<gene>
    <name type="primary">hepC</name>
    <name type="ordered locus">Phep_3797</name>
</gene>
<keyword id="KW-0002">3D-structure</keyword>
<keyword id="KW-0903">Direct protein sequencing</keyword>
<keyword id="KW-0456">Lyase</keyword>
<keyword id="KW-0574">Periplasm</keyword>
<keyword id="KW-1185">Reference proteome</keyword>
<keyword id="KW-0732">Signal</keyword>